<feature type="chain" id="PRO_0000319677" description="Phosphoribosyl-AMP cyclohydrolase">
    <location>
        <begin position="1"/>
        <end position="116"/>
    </location>
</feature>
<feature type="binding site" evidence="1">
    <location>
        <position position="78"/>
    </location>
    <ligand>
        <name>Mg(2+)</name>
        <dbReference type="ChEBI" id="CHEBI:18420"/>
    </ligand>
</feature>
<feature type="binding site" evidence="1">
    <location>
        <position position="79"/>
    </location>
    <ligand>
        <name>Zn(2+)</name>
        <dbReference type="ChEBI" id="CHEBI:29105"/>
        <note>ligand shared between dimeric partners</note>
    </ligand>
</feature>
<feature type="binding site" evidence="1">
    <location>
        <position position="80"/>
    </location>
    <ligand>
        <name>Mg(2+)</name>
        <dbReference type="ChEBI" id="CHEBI:18420"/>
    </ligand>
</feature>
<feature type="binding site" evidence="1">
    <location>
        <position position="82"/>
    </location>
    <ligand>
        <name>Mg(2+)</name>
        <dbReference type="ChEBI" id="CHEBI:18420"/>
    </ligand>
</feature>
<feature type="binding site" evidence="1">
    <location>
        <position position="95"/>
    </location>
    <ligand>
        <name>Zn(2+)</name>
        <dbReference type="ChEBI" id="CHEBI:29105"/>
        <note>ligand shared between dimeric partners</note>
    </ligand>
</feature>
<feature type="binding site" evidence="1">
    <location>
        <position position="102"/>
    </location>
    <ligand>
        <name>Zn(2+)</name>
        <dbReference type="ChEBI" id="CHEBI:29105"/>
        <note>ligand shared between dimeric partners</note>
    </ligand>
</feature>
<gene>
    <name evidence="1" type="primary">hisI</name>
    <name type="ordered locus">Acry_2265</name>
</gene>
<comment type="function">
    <text evidence="1">Catalyzes the hydrolysis of the adenine ring of phosphoribosyl-AMP.</text>
</comment>
<comment type="catalytic activity">
    <reaction evidence="1">
        <text>1-(5-phospho-beta-D-ribosyl)-5'-AMP + H2O = 1-(5-phospho-beta-D-ribosyl)-5-[(5-phospho-beta-D-ribosylamino)methylideneamino]imidazole-4-carboxamide</text>
        <dbReference type="Rhea" id="RHEA:20049"/>
        <dbReference type="ChEBI" id="CHEBI:15377"/>
        <dbReference type="ChEBI" id="CHEBI:58435"/>
        <dbReference type="ChEBI" id="CHEBI:59457"/>
        <dbReference type="EC" id="3.5.4.19"/>
    </reaction>
</comment>
<comment type="cofactor">
    <cofactor evidence="1">
        <name>Mg(2+)</name>
        <dbReference type="ChEBI" id="CHEBI:18420"/>
    </cofactor>
    <text evidence="1">Binds 1 Mg(2+) ion per subunit.</text>
</comment>
<comment type="cofactor">
    <cofactor evidence="1">
        <name>Zn(2+)</name>
        <dbReference type="ChEBI" id="CHEBI:29105"/>
    </cofactor>
    <text evidence="1">Binds 1 zinc ion per subunit.</text>
</comment>
<comment type="pathway">
    <text evidence="1">Amino-acid biosynthesis; L-histidine biosynthesis; L-histidine from 5-phospho-alpha-D-ribose 1-diphosphate: step 3/9.</text>
</comment>
<comment type="subunit">
    <text evidence="1">Homodimer.</text>
</comment>
<comment type="subcellular location">
    <subcellularLocation>
        <location evidence="1">Cytoplasm</location>
    </subcellularLocation>
</comment>
<comment type="similarity">
    <text evidence="1">Belongs to the PRA-CH family.</text>
</comment>
<name>HIS3_ACICJ</name>
<dbReference type="EC" id="3.5.4.19" evidence="1"/>
<dbReference type="EMBL" id="CP000697">
    <property type="protein sequence ID" value="ABQ31460.1"/>
    <property type="molecule type" value="Genomic_DNA"/>
</dbReference>
<dbReference type="RefSeq" id="WP_012039920.1">
    <property type="nucleotide sequence ID" value="NC_009484.1"/>
</dbReference>
<dbReference type="SMR" id="A5G0S8"/>
<dbReference type="STRING" id="349163.Acry_2265"/>
<dbReference type="KEGG" id="acr:Acry_2265"/>
<dbReference type="eggNOG" id="COG0139">
    <property type="taxonomic scope" value="Bacteria"/>
</dbReference>
<dbReference type="HOGENOM" id="CLU_048577_5_3_5"/>
<dbReference type="UniPathway" id="UPA00031">
    <property type="reaction ID" value="UER00008"/>
</dbReference>
<dbReference type="Proteomes" id="UP000000245">
    <property type="component" value="Chromosome"/>
</dbReference>
<dbReference type="GO" id="GO:0005737">
    <property type="term" value="C:cytoplasm"/>
    <property type="evidence" value="ECO:0007669"/>
    <property type="project" value="UniProtKB-SubCell"/>
</dbReference>
<dbReference type="GO" id="GO:0000287">
    <property type="term" value="F:magnesium ion binding"/>
    <property type="evidence" value="ECO:0007669"/>
    <property type="project" value="UniProtKB-UniRule"/>
</dbReference>
<dbReference type="GO" id="GO:0004635">
    <property type="term" value="F:phosphoribosyl-AMP cyclohydrolase activity"/>
    <property type="evidence" value="ECO:0007669"/>
    <property type="project" value="UniProtKB-UniRule"/>
</dbReference>
<dbReference type="GO" id="GO:0008270">
    <property type="term" value="F:zinc ion binding"/>
    <property type="evidence" value="ECO:0007669"/>
    <property type="project" value="UniProtKB-UniRule"/>
</dbReference>
<dbReference type="GO" id="GO:0000105">
    <property type="term" value="P:L-histidine biosynthetic process"/>
    <property type="evidence" value="ECO:0007669"/>
    <property type="project" value="UniProtKB-UniRule"/>
</dbReference>
<dbReference type="FunFam" id="3.10.20.810:FF:000001">
    <property type="entry name" value="Histidine biosynthesis bifunctional protein HisIE"/>
    <property type="match status" value="1"/>
</dbReference>
<dbReference type="Gene3D" id="3.10.20.810">
    <property type="entry name" value="Phosphoribosyl-AMP cyclohydrolase"/>
    <property type="match status" value="1"/>
</dbReference>
<dbReference type="HAMAP" id="MF_01021">
    <property type="entry name" value="HisI"/>
    <property type="match status" value="1"/>
</dbReference>
<dbReference type="InterPro" id="IPR026660">
    <property type="entry name" value="PRA-CH"/>
</dbReference>
<dbReference type="InterPro" id="IPR002496">
    <property type="entry name" value="PRib_AMP_CycHydrolase_dom"/>
</dbReference>
<dbReference type="InterPro" id="IPR038019">
    <property type="entry name" value="PRib_AMP_CycHydrolase_sf"/>
</dbReference>
<dbReference type="NCBIfam" id="NF000768">
    <property type="entry name" value="PRK00051.1"/>
    <property type="match status" value="1"/>
</dbReference>
<dbReference type="PANTHER" id="PTHR42945">
    <property type="entry name" value="HISTIDINE BIOSYNTHESIS BIFUNCTIONAL PROTEIN"/>
    <property type="match status" value="1"/>
</dbReference>
<dbReference type="PANTHER" id="PTHR42945:SF1">
    <property type="entry name" value="HISTIDINE BIOSYNTHESIS BIFUNCTIONAL PROTEIN HIS7"/>
    <property type="match status" value="1"/>
</dbReference>
<dbReference type="Pfam" id="PF01502">
    <property type="entry name" value="PRA-CH"/>
    <property type="match status" value="1"/>
</dbReference>
<dbReference type="SUPFAM" id="SSF141734">
    <property type="entry name" value="HisI-like"/>
    <property type="match status" value="1"/>
</dbReference>
<accession>A5G0S8</accession>
<evidence type="ECO:0000255" key="1">
    <source>
        <dbReference type="HAMAP-Rule" id="MF_01021"/>
    </source>
</evidence>
<protein>
    <recommendedName>
        <fullName evidence="1">Phosphoribosyl-AMP cyclohydrolase</fullName>
        <shortName evidence="1">PRA-CH</shortName>
        <ecNumber evidence="1">3.5.4.19</ecNumber>
    </recommendedName>
</protein>
<organism>
    <name type="scientific">Acidiphilium cryptum (strain JF-5)</name>
    <dbReference type="NCBI Taxonomy" id="349163"/>
    <lineage>
        <taxon>Bacteria</taxon>
        <taxon>Pseudomonadati</taxon>
        <taxon>Pseudomonadota</taxon>
        <taxon>Alphaproteobacteria</taxon>
        <taxon>Acetobacterales</taxon>
        <taxon>Acidocellaceae</taxon>
        <taxon>Acidiphilium</taxon>
    </lineage>
</organism>
<proteinExistence type="inferred from homology"/>
<keyword id="KW-0028">Amino-acid biosynthesis</keyword>
<keyword id="KW-0963">Cytoplasm</keyword>
<keyword id="KW-0368">Histidine biosynthesis</keyword>
<keyword id="KW-0378">Hydrolase</keyword>
<keyword id="KW-0460">Magnesium</keyword>
<keyword id="KW-0479">Metal-binding</keyword>
<keyword id="KW-1185">Reference proteome</keyword>
<keyword id="KW-0862">Zinc</keyword>
<sequence>MTHPVITAARFNEAGLIPAIAQQHDTGEVLMMAWMNAESIAESLSTGQVCYFSRSRGKLWRKGESSGHVQRLVEMRLDCDGDTLLLLVEQTGPACHTGAHNCFFRRVTKDGLEEIA</sequence>
<reference key="1">
    <citation type="submission" date="2007-05" db="EMBL/GenBank/DDBJ databases">
        <title>Complete sequence of chromosome of Acidiphilium cryptum JF-5.</title>
        <authorList>
            <consortium name="US DOE Joint Genome Institute"/>
            <person name="Copeland A."/>
            <person name="Lucas S."/>
            <person name="Lapidus A."/>
            <person name="Barry K."/>
            <person name="Detter J.C."/>
            <person name="Glavina del Rio T."/>
            <person name="Hammon N."/>
            <person name="Israni S."/>
            <person name="Dalin E."/>
            <person name="Tice H."/>
            <person name="Pitluck S."/>
            <person name="Sims D."/>
            <person name="Brettin T."/>
            <person name="Bruce D."/>
            <person name="Han C."/>
            <person name="Schmutz J."/>
            <person name="Larimer F."/>
            <person name="Land M."/>
            <person name="Hauser L."/>
            <person name="Kyrpides N."/>
            <person name="Kim E."/>
            <person name="Magnuson T."/>
            <person name="Richardson P."/>
        </authorList>
    </citation>
    <scope>NUCLEOTIDE SEQUENCE [LARGE SCALE GENOMIC DNA]</scope>
    <source>
        <strain>JF-5</strain>
    </source>
</reference>